<protein>
    <recommendedName>
        <fullName evidence="1">Pyrrolidone-carboxylate peptidase</fullName>
        <ecNumber evidence="1">3.4.19.3</ecNumber>
    </recommendedName>
    <alternativeName>
        <fullName evidence="1">5-oxoprolyl-peptidase</fullName>
    </alternativeName>
    <alternativeName>
        <fullName evidence="1">Pyroglutamyl-peptidase I</fullName>
        <shortName evidence="1">PGP-I</shortName>
        <shortName evidence="1">Pyrase</shortName>
    </alternativeName>
</protein>
<name>PCP_STRP8</name>
<reference key="1">
    <citation type="journal article" date="2002" name="Proc. Natl. Acad. Sci. U.S.A.">
        <title>Genome sequence and comparative microarray analysis of serotype M18 group A Streptococcus strains associated with acute rheumatic fever outbreaks.</title>
        <authorList>
            <person name="Smoot J.C."/>
            <person name="Barbian K.D."/>
            <person name="Van Gompel J.J."/>
            <person name="Smoot L.M."/>
            <person name="Chaussee M.S."/>
            <person name="Sylva G.L."/>
            <person name="Sturdevant D.E."/>
            <person name="Ricklefs S.M."/>
            <person name="Porcella S.F."/>
            <person name="Parkins L.D."/>
            <person name="Beres S.B."/>
            <person name="Campbell D.S."/>
            <person name="Smith T.M."/>
            <person name="Zhang Q."/>
            <person name="Kapur V."/>
            <person name="Daly J.A."/>
            <person name="Veasy L.G."/>
            <person name="Musser J.M."/>
        </authorList>
    </citation>
    <scope>NUCLEOTIDE SEQUENCE [LARGE SCALE GENOMIC DNA]</scope>
    <source>
        <strain>MGAS8232</strain>
    </source>
</reference>
<accession>Q8P243</accession>
<feature type="chain" id="PRO_0000184745" description="Pyrrolidone-carboxylate peptidase">
    <location>
        <begin position="1"/>
        <end position="215"/>
    </location>
</feature>
<feature type="active site" evidence="1">
    <location>
        <position position="78"/>
    </location>
</feature>
<feature type="active site" evidence="1">
    <location>
        <position position="141"/>
    </location>
</feature>
<feature type="active site" evidence="1">
    <location>
        <position position="165"/>
    </location>
</feature>
<organism>
    <name type="scientific">Streptococcus pyogenes serotype M18 (strain MGAS8232)</name>
    <dbReference type="NCBI Taxonomy" id="186103"/>
    <lineage>
        <taxon>Bacteria</taxon>
        <taxon>Bacillati</taxon>
        <taxon>Bacillota</taxon>
        <taxon>Bacilli</taxon>
        <taxon>Lactobacillales</taxon>
        <taxon>Streptococcaceae</taxon>
        <taxon>Streptococcus</taxon>
    </lineage>
</organism>
<evidence type="ECO:0000255" key="1">
    <source>
        <dbReference type="HAMAP-Rule" id="MF_00417"/>
    </source>
</evidence>
<dbReference type="EC" id="3.4.19.3" evidence="1"/>
<dbReference type="EMBL" id="AE009949">
    <property type="protein sequence ID" value="AAL97259.1"/>
    <property type="molecule type" value="Genomic_DNA"/>
</dbReference>
<dbReference type="RefSeq" id="WP_011017474.1">
    <property type="nucleotide sequence ID" value="NC_003485.1"/>
</dbReference>
<dbReference type="SMR" id="Q8P243"/>
<dbReference type="MEROPS" id="C15.001"/>
<dbReference type="KEGG" id="spm:spyM18_0565"/>
<dbReference type="HOGENOM" id="CLU_043960_4_0_9"/>
<dbReference type="GO" id="GO:0005829">
    <property type="term" value="C:cytosol"/>
    <property type="evidence" value="ECO:0007669"/>
    <property type="project" value="InterPro"/>
</dbReference>
<dbReference type="GO" id="GO:0016920">
    <property type="term" value="F:pyroglutamyl-peptidase activity"/>
    <property type="evidence" value="ECO:0007669"/>
    <property type="project" value="UniProtKB-UniRule"/>
</dbReference>
<dbReference type="GO" id="GO:0006508">
    <property type="term" value="P:proteolysis"/>
    <property type="evidence" value="ECO:0007669"/>
    <property type="project" value="UniProtKB-KW"/>
</dbReference>
<dbReference type="CDD" id="cd00501">
    <property type="entry name" value="Peptidase_C15"/>
    <property type="match status" value="1"/>
</dbReference>
<dbReference type="FunFam" id="3.40.630.20:FF:000001">
    <property type="entry name" value="Pyrrolidone-carboxylate peptidase"/>
    <property type="match status" value="1"/>
</dbReference>
<dbReference type="Gene3D" id="3.40.630.20">
    <property type="entry name" value="Peptidase C15, pyroglutamyl peptidase I-like"/>
    <property type="match status" value="1"/>
</dbReference>
<dbReference type="HAMAP" id="MF_00417">
    <property type="entry name" value="Pyrrolid_peptidase"/>
    <property type="match status" value="1"/>
</dbReference>
<dbReference type="InterPro" id="IPR000816">
    <property type="entry name" value="Peptidase_C15"/>
</dbReference>
<dbReference type="InterPro" id="IPR016125">
    <property type="entry name" value="Peptidase_C15-like"/>
</dbReference>
<dbReference type="InterPro" id="IPR036440">
    <property type="entry name" value="Peptidase_C15-like_sf"/>
</dbReference>
<dbReference type="InterPro" id="IPR029762">
    <property type="entry name" value="PGP-I_bact-type"/>
</dbReference>
<dbReference type="InterPro" id="IPR033694">
    <property type="entry name" value="PGPEP1_Cys_AS"/>
</dbReference>
<dbReference type="InterPro" id="IPR033693">
    <property type="entry name" value="PGPEP1_Glu_AS"/>
</dbReference>
<dbReference type="NCBIfam" id="NF009676">
    <property type="entry name" value="PRK13197.1"/>
    <property type="match status" value="1"/>
</dbReference>
<dbReference type="NCBIfam" id="TIGR00504">
    <property type="entry name" value="pyro_pdase"/>
    <property type="match status" value="1"/>
</dbReference>
<dbReference type="PANTHER" id="PTHR23402">
    <property type="entry name" value="PROTEASE FAMILY C15 PYROGLUTAMYL-PEPTIDASE I-RELATED"/>
    <property type="match status" value="1"/>
</dbReference>
<dbReference type="PANTHER" id="PTHR23402:SF1">
    <property type="entry name" value="PYROGLUTAMYL-PEPTIDASE I"/>
    <property type="match status" value="1"/>
</dbReference>
<dbReference type="Pfam" id="PF01470">
    <property type="entry name" value="Peptidase_C15"/>
    <property type="match status" value="1"/>
</dbReference>
<dbReference type="PIRSF" id="PIRSF015592">
    <property type="entry name" value="Prld-crbxl_pptds"/>
    <property type="match status" value="1"/>
</dbReference>
<dbReference type="PRINTS" id="PR00706">
    <property type="entry name" value="PYROGLUPTASE"/>
</dbReference>
<dbReference type="SUPFAM" id="SSF53182">
    <property type="entry name" value="Pyrrolidone carboxyl peptidase (pyroglutamate aminopeptidase)"/>
    <property type="match status" value="1"/>
</dbReference>
<dbReference type="PROSITE" id="PS01334">
    <property type="entry name" value="PYRASE_CYS"/>
    <property type="match status" value="1"/>
</dbReference>
<dbReference type="PROSITE" id="PS01333">
    <property type="entry name" value="PYRASE_GLU"/>
    <property type="match status" value="1"/>
</dbReference>
<comment type="function">
    <text evidence="1">Removes 5-oxoproline from various penultimate amino acid residues except L-proline.</text>
</comment>
<comment type="catalytic activity">
    <reaction evidence="1">
        <text>Release of an N-terminal pyroglutamyl group from a polypeptide, the second amino acid generally not being Pro.</text>
        <dbReference type="EC" id="3.4.19.3"/>
    </reaction>
</comment>
<comment type="subunit">
    <text evidence="1">Homotetramer.</text>
</comment>
<comment type="subcellular location">
    <subcellularLocation>
        <location evidence="1">Cytoplasm</location>
    </subcellularLocation>
</comment>
<comment type="similarity">
    <text evidence="1">Belongs to the peptidase C15 family.</text>
</comment>
<proteinExistence type="inferred from homology"/>
<keyword id="KW-0963">Cytoplasm</keyword>
<keyword id="KW-0378">Hydrolase</keyword>
<keyword id="KW-0645">Protease</keyword>
<keyword id="KW-0788">Thiol protease</keyword>
<sequence>MKILITGFDPFGGEAINPALEAIKKLPATIHGAEIKCIEVPTVFQKSADVLQQHIESFQPDAVLCIGQAGGRTGLTPERVAINQDDARIPDNEGNQPIDTPIRADGKAAYFSTLPIKAMVAAIHQAGLPASVSNTAGTFVCNHLMYQALYLVDKYCPNAKAGFMHIPFMMEQVVDKPNTAAMNLDDITRGIEAAIFAIVDFKDRSDLKRVGGATH</sequence>
<gene>
    <name evidence="1" type="primary">pcp</name>
    <name type="ordered locus">spyM18_0565</name>
</gene>